<sequence length="341" mass="36691">MAAPDSRLPNIALAGPTAAGKTAAALALAAALGRRQAVEIISVDSALVYRGMDIGSAKPTPAERAAVPHHLIDIRDPLQAYSAAEFVQDARRLIGEIRARGALPLLVGGTMLYFKALFDGLDAMPAADPAVRARLNARAAEQGWPALHTELARVDPVTAARLAPGDSQRIQRALEVWQISGQPLSSFHAIEKGAAGAYGACACALFSLEPQDRAWLHERIARRFDAMLAAGFIAEVQALRARGDLHPDLPAMRCVGYRQVWEALDWQARHAGGPPLHGAPLHARGMDAVRERGVAATRQLAKRQITWLRSMPQRHTTACDQPQAVAQLVQAVLQRLEQHAP</sequence>
<accession>A1WQM5</accession>
<dbReference type="EC" id="2.5.1.75" evidence="1"/>
<dbReference type="EMBL" id="CP000542">
    <property type="protein sequence ID" value="ABM59932.1"/>
    <property type="molecule type" value="Genomic_DNA"/>
</dbReference>
<dbReference type="RefSeq" id="WP_011811919.1">
    <property type="nucleotide sequence ID" value="NC_008786.1"/>
</dbReference>
<dbReference type="SMR" id="A1WQM5"/>
<dbReference type="STRING" id="391735.Veis_4227"/>
<dbReference type="GeneID" id="76462557"/>
<dbReference type="KEGG" id="vei:Veis_4227"/>
<dbReference type="eggNOG" id="COG0324">
    <property type="taxonomic scope" value="Bacteria"/>
</dbReference>
<dbReference type="HOGENOM" id="CLU_032616_0_0_4"/>
<dbReference type="OrthoDB" id="9776390at2"/>
<dbReference type="Proteomes" id="UP000000374">
    <property type="component" value="Chromosome"/>
</dbReference>
<dbReference type="GO" id="GO:0005524">
    <property type="term" value="F:ATP binding"/>
    <property type="evidence" value="ECO:0007669"/>
    <property type="project" value="UniProtKB-UniRule"/>
</dbReference>
<dbReference type="GO" id="GO:0052381">
    <property type="term" value="F:tRNA dimethylallyltransferase activity"/>
    <property type="evidence" value="ECO:0007669"/>
    <property type="project" value="UniProtKB-UniRule"/>
</dbReference>
<dbReference type="GO" id="GO:0006400">
    <property type="term" value="P:tRNA modification"/>
    <property type="evidence" value="ECO:0007669"/>
    <property type="project" value="TreeGrafter"/>
</dbReference>
<dbReference type="FunFam" id="1.10.20.140:FF:000001">
    <property type="entry name" value="tRNA dimethylallyltransferase"/>
    <property type="match status" value="1"/>
</dbReference>
<dbReference type="Gene3D" id="1.10.20.140">
    <property type="match status" value="1"/>
</dbReference>
<dbReference type="Gene3D" id="3.40.50.300">
    <property type="entry name" value="P-loop containing nucleotide triphosphate hydrolases"/>
    <property type="match status" value="1"/>
</dbReference>
<dbReference type="HAMAP" id="MF_00185">
    <property type="entry name" value="IPP_trans"/>
    <property type="match status" value="1"/>
</dbReference>
<dbReference type="InterPro" id="IPR039657">
    <property type="entry name" value="Dimethylallyltransferase"/>
</dbReference>
<dbReference type="InterPro" id="IPR018022">
    <property type="entry name" value="IPT"/>
</dbReference>
<dbReference type="InterPro" id="IPR027417">
    <property type="entry name" value="P-loop_NTPase"/>
</dbReference>
<dbReference type="NCBIfam" id="TIGR00174">
    <property type="entry name" value="miaA"/>
    <property type="match status" value="1"/>
</dbReference>
<dbReference type="PANTHER" id="PTHR11088">
    <property type="entry name" value="TRNA DIMETHYLALLYLTRANSFERASE"/>
    <property type="match status" value="1"/>
</dbReference>
<dbReference type="PANTHER" id="PTHR11088:SF60">
    <property type="entry name" value="TRNA DIMETHYLALLYLTRANSFERASE"/>
    <property type="match status" value="1"/>
</dbReference>
<dbReference type="Pfam" id="PF01715">
    <property type="entry name" value="IPPT"/>
    <property type="match status" value="1"/>
</dbReference>
<dbReference type="SUPFAM" id="SSF52540">
    <property type="entry name" value="P-loop containing nucleoside triphosphate hydrolases"/>
    <property type="match status" value="1"/>
</dbReference>
<gene>
    <name evidence="1" type="primary">miaA</name>
    <name type="ordered locus">Veis_4227</name>
</gene>
<reference key="1">
    <citation type="submission" date="2006-12" db="EMBL/GenBank/DDBJ databases">
        <title>Complete sequence of chromosome 1 of Verminephrobacter eiseniae EF01-2.</title>
        <authorList>
            <person name="Copeland A."/>
            <person name="Lucas S."/>
            <person name="Lapidus A."/>
            <person name="Barry K."/>
            <person name="Detter J.C."/>
            <person name="Glavina del Rio T."/>
            <person name="Dalin E."/>
            <person name="Tice H."/>
            <person name="Pitluck S."/>
            <person name="Chertkov O."/>
            <person name="Brettin T."/>
            <person name="Bruce D."/>
            <person name="Han C."/>
            <person name="Tapia R."/>
            <person name="Gilna P."/>
            <person name="Schmutz J."/>
            <person name="Larimer F."/>
            <person name="Land M."/>
            <person name="Hauser L."/>
            <person name="Kyrpides N."/>
            <person name="Kim E."/>
            <person name="Stahl D."/>
            <person name="Richardson P."/>
        </authorList>
    </citation>
    <scope>NUCLEOTIDE SEQUENCE [LARGE SCALE GENOMIC DNA]</scope>
    <source>
        <strain>EF01-2</strain>
    </source>
</reference>
<comment type="function">
    <text evidence="1">Catalyzes the transfer of a dimethylallyl group onto the adenine at position 37 in tRNAs that read codons beginning with uridine, leading to the formation of N6-(dimethylallyl)adenosine (i(6)A).</text>
</comment>
<comment type="catalytic activity">
    <reaction evidence="1">
        <text>adenosine(37) in tRNA + dimethylallyl diphosphate = N(6)-dimethylallyladenosine(37) in tRNA + diphosphate</text>
        <dbReference type="Rhea" id="RHEA:26482"/>
        <dbReference type="Rhea" id="RHEA-COMP:10162"/>
        <dbReference type="Rhea" id="RHEA-COMP:10375"/>
        <dbReference type="ChEBI" id="CHEBI:33019"/>
        <dbReference type="ChEBI" id="CHEBI:57623"/>
        <dbReference type="ChEBI" id="CHEBI:74411"/>
        <dbReference type="ChEBI" id="CHEBI:74415"/>
        <dbReference type="EC" id="2.5.1.75"/>
    </reaction>
</comment>
<comment type="cofactor">
    <cofactor evidence="1">
        <name>Mg(2+)</name>
        <dbReference type="ChEBI" id="CHEBI:18420"/>
    </cofactor>
</comment>
<comment type="subunit">
    <text evidence="1">Monomer.</text>
</comment>
<comment type="similarity">
    <text evidence="1">Belongs to the IPP transferase family.</text>
</comment>
<keyword id="KW-0067">ATP-binding</keyword>
<keyword id="KW-0460">Magnesium</keyword>
<keyword id="KW-0547">Nucleotide-binding</keyword>
<keyword id="KW-1185">Reference proteome</keyword>
<keyword id="KW-0808">Transferase</keyword>
<keyword id="KW-0819">tRNA processing</keyword>
<organism>
    <name type="scientific">Verminephrobacter eiseniae (strain EF01-2)</name>
    <dbReference type="NCBI Taxonomy" id="391735"/>
    <lineage>
        <taxon>Bacteria</taxon>
        <taxon>Pseudomonadati</taxon>
        <taxon>Pseudomonadota</taxon>
        <taxon>Betaproteobacteria</taxon>
        <taxon>Burkholderiales</taxon>
        <taxon>Comamonadaceae</taxon>
        <taxon>Verminephrobacter</taxon>
    </lineage>
</organism>
<feature type="chain" id="PRO_0000377365" description="tRNA dimethylallyltransferase">
    <location>
        <begin position="1"/>
        <end position="341"/>
    </location>
</feature>
<feature type="region of interest" description="Interaction with substrate tRNA" evidence="1">
    <location>
        <begin position="44"/>
        <end position="47"/>
    </location>
</feature>
<feature type="region of interest" description="Interaction with substrate tRNA" evidence="1">
    <location>
        <begin position="168"/>
        <end position="172"/>
    </location>
</feature>
<feature type="region of interest" description="Interaction with substrate tRNA" evidence="1">
    <location>
        <begin position="253"/>
        <end position="258"/>
    </location>
</feature>
<feature type="region of interest" description="Interaction with substrate tRNA" evidence="1">
    <location>
        <begin position="302"/>
        <end position="309"/>
    </location>
</feature>
<feature type="binding site" evidence="1">
    <location>
        <begin position="15"/>
        <end position="22"/>
    </location>
    <ligand>
        <name>ATP</name>
        <dbReference type="ChEBI" id="CHEBI:30616"/>
    </ligand>
</feature>
<feature type="binding site" evidence="1">
    <location>
        <begin position="17"/>
        <end position="22"/>
    </location>
    <ligand>
        <name>substrate</name>
    </ligand>
</feature>
<feature type="site" description="Interaction with substrate tRNA" evidence="1">
    <location>
        <position position="110"/>
    </location>
</feature>
<feature type="site" description="Interaction with substrate tRNA" evidence="1">
    <location>
        <position position="132"/>
    </location>
</feature>
<proteinExistence type="inferred from homology"/>
<name>MIAA_VEREI</name>
<protein>
    <recommendedName>
        <fullName evidence="1">tRNA dimethylallyltransferase</fullName>
        <ecNumber evidence="1">2.5.1.75</ecNumber>
    </recommendedName>
    <alternativeName>
        <fullName evidence="1">Dimethylallyl diphosphate:tRNA dimethylallyltransferase</fullName>
        <shortName evidence="1">DMAPP:tRNA dimethylallyltransferase</shortName>
        <shortName evidence="1">DMATase</shortName>
    </alternativeName>
    <alternativeName>
        <fullName evidence="1">Isopentenyl-diphosphate:tRNA isopentenyltransferase</fullName>
        <shortName evidence="1">IPP transferase</shortName>
        <shortName evidence="1">IPPT</shortName>
        <shortName evidence="1">IPTase</shortName>
    </alternativeName>
</protein>
<evidence type="ECO:0000255" key="1">
    <source>
        <dbReference type="HAMAP-Rule" id="MF_00185"/>
    </source>
</evidence>